<gene>
    <name type="primary">PPFIA1</name>
    <name type="synonym">LIP1</name>
</gene>
<organism>
    <name type="scientific">Homo sapiens</name>
    <name type="common">Human</name>
    <dbReference type="NCBI Taxonomy" id="9606"/>
    <lineage>
        <taxon>Eukaryota</taxon>
        <taxon>Metazoa</taxon>
        <taxon>Chordata</taxon>
        <taxon>Craniata</taxon>
        <taxon>Vertebrata</taxon>
        <taxon>Euteleostomi</taxon>
        <taxon>Mammalia</taxon>
        <taxon>Eutheria</taxon>
        <taxon>Euarchontoglires</taxon>
        <taxon>Primates</taxon>
        <taxon>Haplorrhini</taxon>
        <taxon>Catarrhini</taxon>
        <taxon>Hominidae</taxon>
        <taxon>Homo</taxon>
    </lineage>
</organism>
<dbReference type="EMBL" id="U22815">
    <property type="protein sequence ID" value="AAC50172.1"/>
    <property type="molecule type" value="mRNA"/>
</dbReference>
<dbReference type="EMBL" id="U22816">
    <property type="protein sequence ID" value="AAC50173.1"/>
    <property type="molecule type" value="mRNA"/>
</dbReference>
<dbReference type="EMBL" id="AP002336">
    <property type="status" value="NOT_ANNOTATED_CDS"/>
    <property type="molecule type" value="Genomic_DNA"/>
</dbReference>
<dbReference type="EMBL" id="BC034046">
    <property type="protein sequence ID" value="AAH34046.1"/>
    <property type="molecule type" value="mRNA"/>
</dbReference>
<dbReference type="EMBL" id="D49354">
    <property type="protein sequence ID" value="BAA08353.1"/>
    <property type="status" value="ALT_FRAME"/>
    <property type="molecule type" value="mRNA"/>
</dbReference>
<dbReference type="CCDS" id="CCDS31627.1">
    <molecule id="Q13136-1"/>
</dbReference>
<dbReference type="CCDS" id="CCDS31628.1">
    <molecule id="Q13136-2"/>
</dbReference>
<dbReference type="PIR" id="S55553">
    <property type="entry name" value="S55553"/>
</dbReference>
<dbReference type="RefSeq" id="NP_003617.1">
    <molecule id="Q13136-1"/>
    <property type="nucleotide sequence ID" value="NM_003626.5"/>
</dbReference>
<dbReference type="RefSeq" id="NP_803172.1">
    <molecule id="Q13136-2"/>
    <property type="nucleotide sequence ID" value="NM_177423.3"/>
</dbReference>
<dbReference type="PDB" id="1N7F">
    <property type="method" value="X-ray"/>
    <property type="resolution" value="1.80 A"/>
    <property type="chains" value="C/D=1195-1202"/>
</dbReference>
<dbReference type="PDBsum" id="1N7F"/>
<dbReference type="SMR" id="Q13136"/>
<dbReference type="BioGRID" id="114072">
    <property type="interactions" value="225"/>
</dbReference>
<dbReference type="ELM" id="Q13136"/>
<dbReference type="FunCoup" id="Q13136">
    <property type="interactions" value="2339"/>
</dbReference>
<dbReference type="IntAct" id="Q13136">
    <property type="interactions" value="92"/>
</dbReference>
<dbReference type="MINT" id="Q13136"/>
<dbReference type="STRING" id="9606.ENSP00000253925"/>
<dbReference type="GlyGen" id="Q13136">
    <property type="glycosylation" value="2 sites, 1 N-linked glycan (1 site), 1 O-linked glycan (1 site)"/>
</dbReference>
<dbReference type="iPTMnet" id="Q13136"/>
<dbReference type="MetOSite" id="Q13136"/>
<dbReference type="PhosphoSitePlus" id="Q13136"/>
<dbReference type="BioMuta" id="PPFIA1"/>
<dbReference type="DMDM" id="42558969"/>
<dbReference type="jPOST" id="Q13136"/>
<dbReference type="MassIVE" id="Q13136"/>
<dbReference type="PaxDb" id="9606-ENSP00000253925"/>
<dbReference type="PeptideAtlas" id="Q13136"/>
<dbReference type="ProteomicsDB" id="59184">
    <molecule id="Q13136-1"/>
</dbReference>
<dbReference type="ProteomicsDB" id="59185">
    <molecule id="Q13136-2"/>
</dbReference>
<dbReference type="Pumba" id="Q13136"/>
<dbReference type="Antibodypedia" id="30679">
    <property type="antibodies" value="198 antibodies from 31 providers"/>
</dbReference>
<dbReference type="DNASU" id="8500"/>
<dbReference type="Ensembl" id="ENST00000253925.12">
    <molecule id="Q13136-1"/>
    <property type="protein sequence ID" value="ENSP00000253925.7"/>
    <property type="gene ID" value="ENSG00000131626.19"/>
</dbReference>
<dbReference type="Ensembl" id="ENST00000389547.7">
    <molecule id="Q13136-2"/>
    <property type="protein sequence ID" value="ENSP00000374198.3"/>
    <property type="gene ID" value="ENSG00000131626.19"/>
</dbReference>
<dbReference type="Ensembl" id="ENST00000672559.2">
    <molecule id="Q13136-1"/>
    <property type="protein sequence ID" value="ENSP00000500898.2"/>
    <property type="gene ID" value="ENSG00000288198.2"/>
</dbReference>
<dbReference type="Ensembl" id="ENST00000672873.2">
    <molecule id="Q13136-2"/>
    <property type="protein sequence ID" value="ENSP00000500481.2"/>
    <property type="gene ID" value="ENSG00000288198.2"/>
</dbReference>
<dbReference type="GeneID" id="8500"/>
<dbReference type="KEGG" id="hsa:8500"/>
<dbReference type="MANE-Select" id="ENST00000253925.12">
    <property type="protein sequence ID" value="ENSP00000253925.7"/>
    <property type="RefSeq nucleotide sequence ID" value="NM_003626.5"/>
    <property type="RefSeq protein sequence ID" value="NP_003617.1"/>
</dbReference>
<dbReference type="UCSC" id="uc001opn.3">
    <molecule id="Q13136-1"/>
    <property type="organism name" value="human"/>
</dbReference>
<dbReference type="AGR" id="HGNC:9245"/>
<dbReference type="CTD" id="8500"/>
<dbReference type="DisGeNET" id="8500"/>
<dbReference type="GeneCards" id="PPFIA1"/>
<dbReference type="HGNC" id="HGNC:9245">
    <property type="gene designation" value="PPFIA1"/>
</dbReference>
<dbReference type="HPA" id="ENSG00000131626">
    <property type="expression patterns" value="Low tissue specificity"/>
</dbReference>
<dbReference type="MIM" id="611054">
    <property type="type" value="gene"/>
</dbReference>
<dbReference type="neXtProt" id="NX_Q13136"/>
<dbReference type="OpenTargets" id="ENSG00000131626"/>
<dbReference type="PharmGKB" id="PA33566"/>
<dbReference type="VEuPathDB" id="HostDB:ENSG00000131626"/>
<dbReference type="eggNOG" id="KOG0249">
    <property type="taxonomic scope" value="Eukaryota"/>
</dbReference>
<dbReference type="GeneTree" id="ENSGT01050000244900"/>
<dbReference type="HOGENOM" id="CLU_006923_0_0_1"/>
<dbReference type="InParanoid" id="Q13136"/>
<dbReference type="OMA" id="CIGLREY"/>
<dbReference type="OrthoDB" id="2132119at2759"/>
<dbReference type="PAN-GO" id="Q13136">
    <property type="GO annotations" value="2 GO annotations based on evolutionary models"/>
</dbReference>
<dbReference type="PhylomeDB" id="Q13136"/>
<dbReference type="TreeFam" id="TF314207"/>
<dbReference type="PathwayCommons" id="Q13136"/>
<dbReference type="Reactome" id="R-HSA-181429">
    <property type="pathway name" value="Serotonin Neurotransmitter Release Cycle"/>
</dbReference>
<dbReference type="Reactome" id="R-HSA-181430">
    <property type="pathway name" value="Norepinephrine Neurotransmitter Release Cycle"/>
</dbReference>
<dbReference type="Reactome" id="R-HSA-210500">
    <property type="pathway name" value="Glutamate Neurotransmitter Release Cycle"/>
</dbReference>
<dbReference type="Reactome" id="R-HSA-212676">
    <property type="pathway name" value="Dopamine Neurotransmitter Release Cycle"/>
</dbReference>
<dbReference type="Reactome" id="R-HSA-264642">
    <property type="pathway name" value="Acetylcholine Neurotransmitter Release Cycle"/>
</dbReference>
<dbReference type="Reactome" id="R-HSA-388844">
    <property type="pathway name" value="Receptor-type tyrosine-protein phosphatases"/>
</dbReference>
<dbReference type="SignaLink" id="Q13136"/>
<dbReference type="SIGNOR" id="Q13136"/>
<dbReference type="BioGRID-ORCS" id="8500">
    <property type="hits" value="27 hits in 1156 CRISPR screens"/>
</dbReference>
<dbReference type="CD-CODE" id="F345034F">
    <property type="entry name" value="Signaling cluster"/>
</dbReference>
<dbReference type="ChiTaRS" id="PPFIA1">
    <property type="organism name" value="human"/>
</dbReference>
<dbReference type="EvolutionaryTrace" id="Q13136"/>
<dbReference type="GeneWiki" id="Liprin-alpha-1"/>
<dbReference type="GenomeRNAi" id="8500"/>
<dbReference type="Pharos" id="Q13136">
    <property type="development level" value="Tbio"/>
</dbReference>
<dbReference type="PRO" id="PR:Q13136"/>
<dbReference type="Proteomes" id="UP000005640">
    <property type="component" value="Chromosome 11"/>
</dbReference>
<dbReference type="RNAct" id="Q13136">
    <property type="molecule type" value="protein"/>
</dbReference>
<dbReference type="Bgee" id="ENSG00000131626">
    <property type="expression patterns" value="Expressed in sural nerve and 206 other cell types or tissues"/>
</dbReference>
<dbReference type="ExpressionAtlas" id="Q13136">
    <property type="expression patterns" value="baseline and differential"/>
</dbReference>
<dbReference type="GO" id="GO:0030424">
    <property type="term" value="C:axon"/>
    <property type="evidence" value="ECO:0007669"/>
    <property type="project" value="Ensembl"/>
</dbReference>
<dbReference type="GO" id="GO:0005938">
    <property type="term" value="C:cell cortex"/>
    <property type="evidence" value="ECO:0000314"/>
    <property type="project" value="UniProtKB"/>
</dbReference>
<dbReference type="GO" id="GO:0005737">
    <property type="term" value="C:cytoplasm"/>
    <property type="evidence" value="ECO:0000304"/>
    <property type="project" value="ProtInc"/>
</dbReference>
<dbReference type="GO" id="GO:0005829">
    <property type="term" value="C:cytosol"/>
    <property type="evidence" value="ECO:0000314"/>
    <property type="project" value="HPA"/>
</dbReference>
<dbReference type="GO" id="GO:0005925">
    <property type="term" value="C:focal adhesion"/>
    <property type="evidence" value="ECO:0000314"/>
    <property type="project" value="HPA"/>
</dbReference>
<dbReference type="GO" id="GO:0048786">
    <property type="term" value="C:presynaptic active zone"/>
    <property type="evidence" value="ECO:0000318"/>
    <property type="project" value="GO_Central"/>
</dbReference>
<dbReference type="GO" id="GO:0032991">
    <property type="term" value="C:protein-containing complex"/>
    <property type="evidence" value="ECO:0007669"/>
    <property type="project" value="Ensembl"/>
</dbReference>
<dbReference type="GO" id="GO:0098685">
    <property type="term" value="C:Schaffer collateral - CA1 synapse"/>
    <property type="evidence" value="ECO:0007669"/>
    <property type="project" value="Ensembl"/>
</dbReference>
<dbReference type="GO" id="GO:0097444">
    <property type="term" value="C:spine apparatus"/>
    <property type="evidence" value="ECO:0007669"/>
    <property type="project" value="Ensembl"/>
</dbReference>
<dbReference type="GO" id="GO:0007160">
    <property type="term" value="P:cell-matrix adhesion"/>
    <property type="evidence" value="ECO:0000304"/>
    <property type="project" value="ProtInc"/>
</dbReference>
<dbReference type="GO" id="GO:0043622">
    <property type="term" value="P:cortical microtubule organization"/>
    <property type="evidence" value="ECO:0000315"/>
    <property type="project" value="UniProtKB"/>
</dbReference>
<dbReference type="GO" id="GO:1903077">
    <property type="term" value="P:negative regulation of protein localization to plasma membrane"/>
    <property type="evidence" value="ECO:0000315"/>
    <property type="project" value="MGI"/>
</dbReference>
<dbReference type="GO" id="GO:0051497">
    <property type="term" value="P:negative regulation of stress fiber assembly"/>
    <property type="evidence" value="ECO:0000315"/>
    <property type="project" value="MGI"/>
</dbReference>
<dbReference type="GO" id="GO:0099072">
    <property type="term" value="P:regulation of postsynaptic membrane neurotransmitter receptor levels"/>
    <property type="evidence" value="ECO:0007669"/>
    <property type="project" value="Ensembl"/>
</dbReference>
<dbReference type="GO" id="GO:0007165">
    <property type="term" value="P:signal transduction"/>
    <property type="evidence" value="ECO:0000304"/>
    <property type="project" value="ProtInc"/>
</dbReference>
<dbReference type="GO" id="GO:0050808">
    <property type="term" value="P:synapse organization"/>
    <property type="evidence" value="ECO:0000318"/>
    <property type="project" value="GO_Central"/>
</dbReference>
<dbReference type="CDD" id="cd09562">
    <property type="entry name" value="SAM_liprin-alpha1_2_3_4_repeat1"/>
    <property type="match status" value="1"/>
</dbReference>
<dbReference type="CDD" id="cd09565">
    <property type="entry name" value="SAM_liprin-alpha1_2_3_4_repeat2"/>
    <property type="match status" value="1"/>
</dbReference>
<dbReference type="CDD" id="cd09568">
    <property type="entry name" value="SAM_liprin-alpha1_2_3_4_repeat3"/>
    <property type="match status" value="1"/>
</dbReference>
<dbReference type="FunFam" id="1.10.150.50:FF:000003">
    <property type="entry name" value="liprin-alpha-2 isoform X1"/>
    <property type="match status" value="1"/>
</dbReference>
<dbReference type="FunFam" id="1.10.150.50:FF:000004">
    <property type="entry name" value="PTPRF interacting protein alpha 1"/>
    <property type="match status" value="1"/>
</dbReference>
<dbReference type="Gene3D" id="1.10.150.50">
    <property type="entry name" value="Transcription Factor, Ets-1"/>
    <property type="match status" value="3"/>
</dbReference>
<dbReference type="InterPro" id="IPR029515">
    <property type="entry name" value="Liprin"/>
</dbReference>
<dbReference type="InterPro" id="IPR037620">
    <property type="entry name" value="Liprin-alpha_SAM_rpt_1"/>
</dbReference>
<dbReference type="InterPro" id="IPR037621">
    <property type="entry name" value="Liprin-alpha_SAM_rpt_2"/>
</dbReference>
<dbReference type="InterPro" id="IPR037622">
    <property type="entry name" value="Liprin-alpha_SAM_rpt_3"/>
</dbReference>
<dbReference type="InterPro" id="IPR001660">
    <property type="entry name" value="SAM"/>
</dbReference>
<dbReference type="InterPro" id="IPR013761">
    <property type="entry name" value="SAM/pointed_sf"/>
</dbReference>
<dbReference type="PANTHER" id="PTHR12587">
    <property type="entry name" value="LAR INTERACTING PROTEIN LIP -RELATED PROTEIN"/>
    <property type="match status" value="1"/>
</dbReference>
<dbReference type="PANTHER" id="PTHR12587:SF15">
    <property type="entry name" value="LIPRIN-ALPHA-1"/>
    <property type="match status" value="1"/>
</dbReference>
<dbReference type="Pfam" id="PF00536">
    <property type="entry name" value="SAM_1"/>
    <property type="match status" value="1"/>
</dbReference>
<dbReference type="Pfam" id="PF07647">
    <property type="entry name" value="SAM_2"/>
    <property type="match status" value="1"/>
</dbReference>
<dbReference type="SMART" id="SM00454">
    <property type="entry name" value="SAM"/>
    <property type="match status" value="3"/>
</dbReference>
<dbReference type="SUPFAM" id="SSF47769">
    <property type="entry name" value="SAM/Pointed domain"/>
    <property type="match status" value="3"/>
</dbReference>
<dbReference type="PROSITE" id="PS50105">
    <property type="entry name" value="SAM_DOMAIN"/>
    <property type="match status" value="3"/>
</dbReference>
<name>LIPA1_HUMAN</name>
<accession>Q13136</accession>
<accession>A6NLE3</accession>
<accession>Q13135</accession>
<accession>Q14567</accession>
<accession>Q8N4I2</accession>
<keyword id="KW-0002">3D-structure</keyword>
<keyword id="KW-0025">Alternative splicing</keyword>
<keyword id="KW-0175">Coiled coil</keyword>
<keyword id="KW-0963">Cytoplasm</keyword>
<keyword id="KW-0597">Phosphoprotein</keyword>
<keyword id="KW-1267">Proteomics identification</keyword>
<keyword id="KW-1185">Reference proteome</keyword>
<keyword id="KW-0677">Repeat</keyword>
<comment type="function">
    <text evidence="6">May regulate the disassembly of focal adhesions. May localize receptor-like tyrosine phosphatases type 2A at specific sites on the plasma membrane, possibly regulating their interaction with the extracellular environment and their association with substrates.</text>
</comment>
<comment type="subunit">
    <text evidence="4 5 6">Homodimer. Interacts with PTPRF (via D2 domain) (PubMed:7796809). Part of a cortical microtubule stabilization complex (CMSC) composed of KANK1, PPFIA1, PPFIBP1, ERC1/ELKS, PHLDB2/LL5beta, CLASPs, KIF21A and possibly additional interactors; within CMSCs KANK1 and PHLDB2/LL5beta seem to be the core components for recruiting microtubule-binding proteins KIF21A and CLASPs, whereas PPFIA1, PPFIBP1 and ERC1/ELKS serve as scaffolds for protein clustering (PubMed:24120883, PubMed:27410476).</text>
</comment>
<comment type="interaction">
    <interactant intactId="EBI-745426">
        <id>Q13136</id>
    </interactant>
    <interactant intactId="EBI-741406">
        <id>P51946</id>
        <label>CCNH</label>
    </interactant>
    <organismsDiffer>false</organismsDiffer>
    <experiments>6</experiments>
</comment>
<comment type="interaction">
    <interactant intactId="EBI-745426">
        <id>Q13136</id>
    </interactant>
    <interactant intactId="EBI-746238">
        <id>Q07002</id>
        <label>CDK18</label>
    </interactant>
    <organismsDiffer>false</organismsDiffer>
    <experiments>3</experiments>
</comment>
<comment type="interaction">
    <interactant intactId="EBI-745426">
        <id>Q13136</id>
    </interactant>
    <interactant intactId="EBI-740402">
        <id>O60941</id>
        <label>DTNB</label>
    </interactant>
    <organismsDiffer>false</organismsDiffer>
    <experiments>7</experiments>
</comment>
<comment type="interaction">
    <interactant intactId="EBI-745426">
        <id>Q13136</id>
    </interactant>
    <interactant intactId="EBI-12094038">
        <id>Q13409-3</id>
        <label>DYNC1I2</label>
    </interactant>
    <organismsDiffer>false</organismsDiffer>
    <experiments>3</experiments>
</comment>
<comment type="interaction">
    <interactant intactId="EBI-745426">
        <id>Q13136</id>
    </interactant>
    <interactant intactId="EBI-742350">
        <id>Q14241</id>
        <label>ELOA</label>
    </interactant>
    <organismsDiffer>false</organismsDiffer>
    <experiments>3</experiments>
</comment>
<comment type="interaction">
    <interactant intactId="EBI-745426">
        <id>Q13136</id>
    </interactant>
    <interactant intactId="EBI-719941">
        <id>Q3B820</id>
        <label>FAM161A</label>
    </interactant>
    <organismsDiffer>false</organismsDiffer>
    <experiments>5</experiments>
</comment>
<comment type="interaction">
    <interactant intactId="EBI-745426">
        <id>Q13136</id>
    </interactant>
    <interactant intactId="EBI-1052570">
        <id>O95995</id>
        <label>GAS8</label>
    </interactant>
    <organismsDiffer>false</organismsDiffer>
    <experiments>3</experiments>
</comment>
<comment type="interaction">
    <interactant intactId="EBI-745426">
        <id>Q13136</id>
    </interactant>
    <interactant intactId="EBI-741953">
        <id>Q9NS73</id>
        <label>MBIP</label>
    </interactant>
    <organismsDiffer>false</organismsDiffer>
    <experiments>3</experiments>
</comment>
<comment type="interaction">
    <interactant intactId="EBI-745426">
        <id>Q13136</id>
    </interactant>
    <interactant intactId="EBI-641666">
        <id>Q15172</id>
        <label>PPP2R5A</label>
    </interactant>
    <organismsDiffer>false</organismsDiffer>
    <experiments>3</experiments>
</comment>
<comment type="interaction">
    <interactant intactId="EBI-745426">
        <id>Q13136</id>
    </interactant>
    <interactant intactId="EBI-396563">
        <id>Q14738</id>
        <label>PPP2R5D</label>
    </interactant>
    <organismsDiffer>false</organismsDiffer>
    <experiments>5</experiments>
</comment>
<comment type="interaction">
    <interactant intactId="EBI-745426">
        <id>Q13136</id>
    </interactant>
    <interactant intactId="EBI-359793">
        <id>P40222</id>
        <label>TXLNA</label>
    </interactant>
    <organismsDiffer>false</organismsDiffer>
    <experiments>5</experiments>
</comment>
<comment type="interaction">
    <interactant intactId="EBI-745426">
        <id>Q13136</id>
    </interactant>
    <interactant intactId="EBI-77718">
        <id>P19491</id>
        <label>Gria2</label>
    </interactant>
    <organismsDiffer>true</organismsDiffer>
    <experiments>2</experiments>
</comment>
<comment type="interaction">
    <interactant intactId="EBI-745426">
        <id>Q13136</id>
    </interactant>
    <interactant intactId="EBI-936113">
        <id>P97879</id>
        <label>Grip1</label>
    </interactant>
    <organismsDiffer>true</organismsDiffer>
    <experiments>4</experiments>
</comment>
<comment type="subcellular location">
    <subcellularLocation>
        <location evidence="4">Cytoplasm</location>
        <location evidence="4">Cell cortex</location>
    </subcellularLocation>
    <subcellularLocation>
        <location evidence="6">Cytoplasm</location>
    </subcellularLocation>
    <text>Colocalizes with PTPRF near focal adhesions.</text>
</comment>
<comment type="alternative products">
    <event type="alternative splicing"/>
    <isoform>
        <id>Q13136-1</id>
        <name>1</name>
        <name>LAR-interacting protein 1b</name>
        <name>LIP.1b</name>
        <name>b</name>
        <sequence type="displayed"/>
    </isoform>
    <isoform>
        <id>Q13136-2</id>
        <name>2</name>
        <name>LAR-interacting protein 1a</name>
        <name>LIP.1a</name>
        <name>a</name>
        <sequence type="described" ref="VSP_009391"/>
    </isoform>
</comment>
<comment type="tissue specificity">
    <text evidence="6 7">Ubiquitous.</text>
</comment>
<comment type="domain">
    <text>The N-terminal coiled coil regions mediate homodimerization preferentially and heterodimerization type alpha/alpha. The C-terminal, non-coiled coil regions mediate heterodimerization type alpha/beta and interaction with PTPRD, PTPRF and PTPRS.</text>
</comment>
<comment type="miscellaneous">
    <molecule>Isoform 2</molecule>
    <text evidence="9">Due to intron retention.</text>
</comment>
<comment type="similarity">
    <text evidence="9">Belongs to the liprin family. Liprin-alpha subfamily.</text>
</comment>
<comment type="sequence caution" evidence="9">
    <conflict type="frameshift">
        <sequence resource="EMBL-CDS" id="BAA08353"/>
    </conflict>
</comment>
<proteinExistence type="evidence at protein level"/>
<reference key="1">
    <citation type="journal article" date="1995" name="EMBO J.">
        <title>The LAR transmembrane protein tyrosine phosphatase and a coiled-coil LAR-interacting protein co-localize at focal adhesions.</title>
        <authorList>
            <person name="Serra-Pages C."/>
            <person name="Kedersha N.L."/>
            <person name="Fazikas L."/>
            <person name="Medley Q.G."/>
            <person name="Debant A."/>
            <person name="Streuli M."/>
        </authorList>
    </citation>
    <scope>NUCLEOTIDE SEQUENCE [MRNA] (ISOFORMS 1 AND 2)</scope>
    <scope>TISSUE SPECIFICITY</scope>
    <scope>FUNCTION</scope>
    <scope>SUBCELLULAR LOCATION</scope>
    <scope>INTERACTION WITH PTPRF</scope>
</reference>
<reference key="2">
    <citation type="journal article" date="2006" name="Nature">
        <title>Human chromosome 11 DNA sequence and analysis including novel gene identification.</title>
        <authorList>
            <person name="Taylor T.D."/>
            <person name="Noguchi H."/>
            <person name="Totoki Y."/>
            <person name="Toyoda A."/>
            <person name="Kuroki Y."/>
            <person name="Dewar K."/>
            <person name="Lloyd C."/>
            <person name="Itoh T."/>
            <person name="Takeda T."/>
            <person name="Kim D.-W."/>
            <person name="She X."/>
            <person name="Barlow K.F."/>
            <person name="Bloom T."/>
            <person name="Bruford E."/>
            <person name="Chang J.L."/>
            <person name="Cuomo C.A."/>
            <person name="Eichler E."/>
            <person name="FitzGerald M.G."/>
            <person name="Jaffe D.B."/>
            <person name="LaButti K."/>
            <person name="Nicol R."/>
            <person name="Park H.-S."/>
            <person name="Seaman C."/>
            <person name="Sougnez C."/>
            <person name="Yang X."/>
            <person name="Zimmer A.R."/>
            <person name="Zody M.C."/>
            <person name="Birren B.W."/>
            <person name="Nusbaum C."/>
            <person name="Fujiyama A."/>
            <person name="Hattori M."/>
            <person name="Rogers J."/>
            <person name="Lander E.S."/>
            <person name="Sakaki Y."/>
        </authorList>
    </citation>
    <scope>NUCLEOTIDE SEQUENCE [LARGE SCALE GENOMIC DNA]</scope>
</reference>
<reference key="3">
    <citation type="journal article" date="2004" name="Genome Res.">
        <title>The status, quality, and expansion of the NIH full-length cDNA project: the Mammalian Gene Collection (MGC).</title>
        <authorList>
            <consortium name="The MGC Project Team"/>
        </authorList>
    </citation>
    <scope>NUCLEOTIDE SEQUENCE [LARGE SCALE MRNA] (ISOFORM 1)</scope>
    <source>
        <tissue>Brain</tissue>
    </source>
</reference>
<reference key="4">
    <citation type="submission" date="1995-02" db="EMBL/GenBank/DDBJ databases">
        <title>Molecular cloning of a cDNA encoding enhancer protein in hsp70 gene.</title>
        <authorList>
            <person name="Taira T."/>
            <person name="Iguchi-Ariga S.M."/>
            <person name="Ariga H."/>
        </authorList>
    </citation>
    <scope>NUCLEOTIDE SEQUENCE [MRNA] OF 672-1123</scope>
</reference>
<reference key="5">
    <citation type="journal article" date="1995" name="Proc. Natl. Acad. Sci. U.S.A.">
        <title>The LAR/PTP delta/PTP sigma subfamily of transmembrane protein-tyrosine-phosphatases: multiple human LAR, PTP delta, and PTP sigma isoforms are expressed in a tissue-specific manner and associate with the LAR-interacting protein LIP.1.</title>
        <authorList>
            <person name="Pulido R."/>
            <person name="Serra-Pages C."/>
            <person name="Tang M."/>
            <person name="Streuli M."/>
        </authorList>
    </citation>
    <scope>INTERACTION WITH PTPRD; PTPRF AND PTPRS</scope>
</reference>
<reference key="6">
    <citation type="journal article" date="1998" name="J. Biol. Chem.">
        <title>Liprins, a family of LAR transmembrane protein-tyrosine phosphatase-interacting proteins.</title>
        <authorList>
            <person name="Serra-Pages C."/>
            <person name="Medley Q.G."/>
            <person name="Tang M."/>
            <person name="Hart A."/>
            <person name="Streuli M."/>
        </authorList>
    </citation>
    <scope>TISSUE SPECIFICITY</scope>
    <scope>INTERACTION WITH PTPRD; PTPRF AND PTPRS</scope>
</reference>
<reference key="7">
    <citation type="journal article" date="2006" name="Cell">
        <title>Global, in vivo, and site-specific phosphorylation dynamics in signaling networks.</title>
        <authorList>
            <person name="Olsen J.V."/>
            <person name="Blagoev B."/>
            <person name="Gnad F."/>
            <person name="Macek B."/>
            <person name="Kumar C."/>
            <person name="Mortensen P."/>
            <person name="Mann M."/>
        </authorList>
    </citation>
    <scope>IDENTIFICATION BY MASS SPECTROMETRY [LARGE SCALE ANALYSIS]</scope>
    <source>
        <tissue>Cervix carcinoma</tissue>
    </source>
</reference>
<reference key="8">
    <citation type="journal article" date="2007" name="Science">
        <title>ATM and ATR substrate analysis reveals extensive protein networks responsive to DNA damage.</title>
        <authorList>
            <person name="Matsuoka S."/>
            <person name="Ballif B.A."/>
            <person name="Smogorzewska A."/>
            <person name="McDonald E.R. III"/>
            <person name="Hurov K.E."/>
            <person name="Luo J."/>
            <person name="Bakalarski C.E."/>
            <person name="Zhao Z."/>
            <person name="Solimini N."/>
            <person name="Lerenthal Y."/>
            <person name="Shiloh Y."/>
            <person name="Gygi S.P."/>
            <person name="Elledge S.J."/>
        </authorList>
    </citation>
    <scope>IDENTIFICATION BY MASS SPECTROMETRY [LARGE SCALE ANALYSIS]</scope>
    <source>
        <tissue>Embryonic kidney</tissue>
    </source>
</reference>
<reference key="9">
    <citation type="journal article" date="2008" name="J. Proteome Res.">
        <title>Combining protein-based IMAC, peptide-based IMAC, and MudPIT for efficient phosphoproteomic analysis.</title>
        <authorList>
            <person name="Cantin G.T."/>
            <person name="Yi W."/>
            <person name="Lu B."/>
            <person name="Park S.K."/>
            <person name="Xu T."/>
            <person name="Lee J.-D."/>
            <person name="Yates J.R. III"/>
        </authorList>
    </citation>
    <scope>IDENTIFICATION BY MASS SPECTROMETRY [LARGE SCALE ANALYSIS]</scope>
    <source>
        <tissue>Cervix carcinoma</tissue>
    </source>
</reference>
<reference key="10">
    <citation type="journal article" date="2008" name="Proc. Natl. Acad. Sci. U.S.A.">
        <title>A quantitative atlas of mitotic phosphorylation.</title>
        <authorList>
            <person name="Dephoure N."/>
            <person name="Zhou C."/>
            <person name="Villen J."/>
            <person name="Beausoleil S.A."/>
            <person name="Bakalarski C.E."/>
            <person name="Elledge S.J."/>
            <person name="Gygi S.P."/>
        </authorList>
    </citation>
    <scope>PHOSPHORYLATION [LARGE SCALE ANALYSIS] AT THR-230; SER-242 AND SER-244</scope>
    <scope>IDENTIFICATION BY MASS SPECTROMETRY [LARGE SCALE ANALYSIS]</scope>
    <source>
        <tissue>Cervix carcinoma</tissue>
    </source>
</reference>
<reference key="11">
    <citation type="journal article" date="2009" name="Anal. Chem.">
        <title>Lys-N and trypsin cover complementary parts of the phosphoproteome in a refined SCX-based approach.</title>
        <authorList>
            <person name="Gauci S."/>
            <person name="Helbig A.O."/>
            <person name="Slijper M."/>
            <person name="Krijgsveld J."/>
            <person name="Heck A.J."/>
            <person name="Mohammed S."/>
        </authorList>
    </citation>
    <scope>IDENTIFICATION BY MASS SPECTROMETRY [LARGE SCALE ANALYSIS]</scope>
</reference>
<reference key="12">
    <citation type="journal article" date="2009" name="Sci. Signal.">
        <title>Quantitative phosphoproteomic analysis of T cell receptor signaling reveals system-wide modulation of protein-protein interactions.</title>
        <authorList>
            <person name="Mayya V."/>
            <person name="Lundgren D.H."/>
            <person name="Hwang S.-I."/>
            <person name="Rezaul K."/>
            <person name="Wu L."/>
            <person name="Eng J.K."/>
            <person name="Rodionov V."/>
            <person name="Han D.K."/>
        </authorList>
    </citation>
    <scope>PHOSPHORYLATION [LARGE SCALE ANALYSIS] AT SER-239; SER-242; SER-693 AND THR-1159</scope>
    <scope>IDENTIFICATION BY MASS SPECTROMETRY [LARGE SCALE ANALYSIS]</scope>
    <source>
        <tissue>Leukemic T-cell</tissue>
    </source>
</reference>
<reference key="13">
    <citation type="journal article" date="2011" name="BMC Syst. Biol.">
        <title>Initial characterization of the human central proteome.</title>
        <authorList>
            <person name="Burkard T.R."/>
            <person name="Planyavsky M."/>
            <person name="Kaupe I."/>
            <person name="Breitwieser F.P."/>
            <person name="Buerckstuemmer T."/>
            <person name="Bennett K.L."/>
            <person name="Superti-Furga G."/>
            <person name="Colinge J."/>
        </authorList>
    </citation>
    <scope>IDENTIFICATION BY MASS SPECTROMETRY [LARGE SCALE ANALYSIS]</scope>
</reference>
<reference key="14">
    <citation type="journal article" date="2011" name="Sci. Signal.">
        <title>System-wide temporal characterization of the proteome and phosphoproteome of human embryonic stem cell differentiation.</title>
        <authorList>
            <person name="Rigbolt K.T."/>
            <person name="Prokhorova T.A."/>
            <person name="Akimov V."/>
            <person name="Henningsen J."/>
            <person name="Johansen P.T."/>
            <person name="Kratchmarova I."/>
            <person name="Kassem M."/>
            <person name="Mann M."/>
            <person name="Olsen J.V."/>
            <person name="Blagoev B."/>
        </authorList>
    </citation>
    <scope>PHOSPHORYLATION [LARGE SCALE ANALYSIS] AT SER-239; SER-242; SER-244 AND SER-448</scope>
    <scope>IDENTIFICATION BY MASS SPECTROMETRY [LARGE SCALE ANALYSIS]</scope>
</reference>
<reference key="15">
    <citation type="journal article" date="2013" name="Dev. Cell">
        <title>CFEOM1-associated kinesin KIF21A is a cortical microtubule growth inhibitor.</title>
        <authorList>
            <person name="van der Vaart B."/>
            <person name="van Riel W.E."/>
            <person name="Doodhi H."/>
            <person name="Kevenaar J.T."/>
            <person name="Katrukha E.A."/>
            <person name="Gumy L."/>
            <person name="Bouchet B.P."/>
            <person name="Grigoriev I."/>
            <person name="Spangler S.A."/>
            <person name="Yu K.L."/>
            <person name="Wulf P.S."/>
            <person name="Wu J."/>
            <person name="Lansbergen G."/>
            <person name="van Battum E.Y."/>
            <person name="Pasterkamp R.J."/>
            <person name="Mimori-Kiyosue Y."/>
            <person name="Demmers J."/>
            <person name="Olieric N."/>
            <person name="Maly I.V."/>
            <person name="Hoogenraad C.C."/>
            <person name="Akhmanova A."/>
        </authorList>
    </citation>
    <scope>SUBUNIT</scope>
    <scope>SUBCELLULAR LOCATION</scope>
</reference>
<reference key="16">
    <citation type="journal article" date="2013" name="J. Proteome Res.">
        <title>Toward a comprehensive characterization of a human cancer cell phosphoproteome.</title>
        <authorList>
            <person name="Zhou H."/>
            <person name="Di Palma S."/>
            <person name="Preisinger C."/>
            <person name="Peng M."/>
            <person name="Polat A.N."/>
            <person name="Heck A.J."/>
            <person name="Mohammed S."/>
        </authorList>
    </citation>
    <scope>PHOSPHORYLATION [LARGE SCALE ANALYSIS] AT SER-150; SER-239; SER-242; SER-666; SER-693; SER-763 AND SER-1133</scope>
    <scope>IDENTIFICATION BY MASS SPECTROMETRY [LARGE SCALE ANALYSIS]</scope>
    <source>
        <tissue>Cervix carcinoma</tissue>
        <tissue>Erythroleukemia</tissue>
    </source>
</reference>
<reference key="17">
    <citation type="journal article" date="2014" name="J. Proteomics">
        <title>An enzyme assisted RP-RPLC approach for in-depth analysis of human liver phosphoproteome.</title>
        <authorList>
            <person name="Bian Y."/>
            <person name="Song C."/>
            <person name="Cheng K."/>
            <person name="Dong M."/>
            <person name="Wang F."/>
            <person name="Huang J."/>
            <person name="Sun D."/>
            <person name="Wang L."/>
            <person name="Ye M."/>
            <person name="Zou H."/>
        </authorList>
    </citation>
    <scope>PHOSPHORYLATION [LARGE SCALE ANALYSIS] AT SER-668 AND THR-761</scope>
    <scope>IDENTIFICATION BY MASS SPECTROMETRY [LARGE SCALE ANALYSIS]</scope>
    <source>
        <tissue>Liver</tissue>
    </source>
</reference>
<reference key="18">
    <citation type="journal article" date="2016" name="Elife">
        <title>Talin-KANK1 interaction controls the recruitment of cortical microtubule stabilizing complexes to focal adhesions.</title>
        <authorList>
            <person name="Bouchet B.P."/>
            <person name="Gough R.E."/>
            <person name="Ammon Y.C."/>
            <person name="van de Willige D."/>
            <person name="Post H."/>
            <person name="Jacquemet G."/>
            <person name="Altelaar A.M."/>
            <person name="Heck A.J."/>
            <person name="Goult B.T."/>
            <person name="Akhmanova A."/>
        </authorList>
    </citation>
    <scope>SUBUNIT</scope>
</reference>
<protein>
    <recommendedName>
        <fullName>Liprin-alpha-1</fullName>
    </recommendedName>
    <alternativeName>
        <fullName>LAR-interacting protein 1</fullName>
        <shortName>LIP-1</shortName>
    </alternativeName>
    <alternativeName>
        <fullName>Protein tyrosine phosphatase receptor type f polypeptide-interacting protein alpha-1</fullName>
        <shortName>PTPRF-interacting protein alpha-1</shortName>
    </alternativeName>
</protein>
<sequence>MMCEVMPTISEAEGPPGGGGGHGSGSPSQPDADSHFEQLMVSMLEERDRLLDTLRETQETLALTQGKLHEVGHERDSLQRQLNTALPQEFAALTKELNVCREQLLEREEEIAELKAERNNTRLLLEHLECLVSRHERSLRMTVVKRQAQSPAGVSSEVEVLKALKSLFEHHKALDEKVRERLRVALERCSLLEEELGATHKELMILKEQNNQKKTLTDGVLDINHEQENTPSTSGKRSSDGSLSHEEDLAKVIELQEIISKQSREQSQMKERLASLSSHVTELEEDLDTARKDLIKSEEMNTKLQRDVREAMAQKEDMEERITTLEKRYLAAQREATSVHDLNDKLENEIANKDSMHRQTEDKNRQLQERLELAEQKLQQTLRKAETLPEVEAELAQRVAALSKAEERHGNIEERLRQMEAQLEEKNQELQRARQREKMNEEHNKRLSDTVDKLLSESNERLQLHLKERMAALEDKNSLLREVESAKKQLEETQHDKDQLVLNIEALRAELDHMRLRGASLHHGRPHLGSVPDFRFPMADGHTDSYSTSAVLRRPQKGRLAALRDEPSKVQTLNEQDWERAQQASVLANVAQAFESDADVSDGEDDRDTLLSSVDLLSPSGQADAHTLAMMLQEQLDAINKEIRLIQEEKENTEQRAEEIESRVGSGSLDNLGRFRSMSSIPPYPASSLASSSPPGSGRSTPRRIPHSPAREVDRLGVMTLLPPSREEVRDDKTTIKCETSPPSSPRALRLDRLHKGALHTVSHEDIRDIRNSTGSQDGPVSNPSSSNSSQDSLHKAPKKKGIKSSIGRLFGKKEKGRPGQTGKEALGQAGVSETDNSSQDALGLSKLGGQAEKNRKLQKKHELLEEARRQGLPFAQWDGPTVVVWLELWVGMPAWYVAACRANVKSGAIMSALSDTEIQREIGISNPLHRLKLRLAIQEIMSLTSPSAPPTSRTTLAYGDMNHEWIGNEWLPSLGLPQYRSYFMECLVDARMLDHLTKKDLRGQLKMVDSFHRNSFQCGIMCLRRLNYDRKELERKREESQSEIKDVLVWSNDRVIRWILSIGLKEYANNLIESGVHGALLALDETFDFSALALLLQIPTQNTQARAVLEREFNNLLVMGTDRRFDEDDDKSFRRAPSWRKKFRPKDIRGLAAGSAETLPANFRVTSSMSSPSMQPKKMQMDGNVSGTQRLDSATVRTYSC</sequence>
<evidence type="ECO:0000255" key="1"/>
<evidence type="ECO:0000255" key="2">
    <source>
        <dbReference type="PROSITE-ProRule" id="PRU00184"/>
    </source>
</evidence>
<evidence type="ECO:0000256" key="3">
    <source>
        <dbReference type="SAM" id="MobiDB-lite"/>
    </source>
</evidence>
<evidence type="ECO:0000269" key="4">
    <source>
    </source>
</evidence>
<evidence type="ECO:0000269" key="5">
    <source>
    </source>
</evidence>
<evidence type="ECO:0000269" key="6">
    <source>
    </source>
</evidence>
<evidence type="ECO:0000269" key="7">
    <source>
    </source>
</evidence>
<evidence type="ECO:0000303" key="8">
    <source>
    </source>
</evidence>
<evidence type="ECO:0000305" key="9"/>
<evidence type="ECO:0007744" key="10">
    <source>
    </source>
</evidence>
<evidence type="ECO:0007744" key="11">
    <source>
    </source>
</evidence>
<evidence type="ECO:0007744" key="12">
    <source>
    </source>
</evidence>
<evidence type="ECO:0007744" key="13">
    <source>
    </source>
</evidence>
<evidence type="ECO:0007744" key="14">
    <source>
    </source>
</evidence>
<evidence type="ECO:0007829" key="15">
    <source>
        <dbReference type="PDB" id="1N7F"/>
    </source>
</evidence>
<feature type="chain" id="PRO_0000191026" description="Liprin-alpha-1">
    <location>
        <begin position="1"/>
        <end position="1202"/>
    </location>
</feature>
<feature type="domain" description="SAM 1" evidence="2">
    <location>
        <begin position="878"/>
        <end position="944"/>
    </location>
</feature>
<feature type="domain" description="SAM 2" evidence="2">
    <location>
        <begin position="963"/>
        <end position="1027"/>
    </location>
</feature>
<feature type="domain" description="SAM 3" evidence="2">
    <location>
        <begin position="1051"/>
        <end position="1120"/>
    </location>
</feature>
<feature type="region of interest" description="Disordered" evidence="3">
    <location>
        <begin position="1"/>
        <end position="33"/>
    </location>
</feature>
<feature type="region of interest" description="Disordered" evidence="3">
    <location>
        <begin position="224"/>
        <end position="245"/>
    </location>
</feature>
<feature type="region of interest" description="Disordered" evidence="3">
    <location>
        <begin position="426"/>
        <end position="446"/>
    </location>
</feature>
<feature type="region of interest" description="Disordered" evidence="3">
    <location>
        <begin position="651"/>
        <end position="855"/>
    </location>
</feature>
<feature type="region of interest" description="Disordered" evidence="3">
    <location>
        <begin position="1163"/>
        <end position="1202"/>
    </location>
</feature>
<feature type="coiled-coil region" evidence="1">
    <location>
        <begin position="34"/>
        <end position="141"/>
    </location>
</feature>
<feature type="coiled-coil region" evidence="1">
    <location>
        <begin position="176"/>
        <end position="214"/>
    </location>
</feature>
<feature type="coiled-coil region" evidence="1">
    <location>
        <begin position="249"/>
        <end position="521"/>
    </location>
</feature>
<feature type="coiled-coil region" evidence="1">
    <location>
        <begin position="623"/>
        <end position="669"/>
    </location>
</feature>
<feature type="coiled-coil region" evidence="1">
    <location>
        <begin position="847"/>
        <end position="871"/>
    </location>
</feature>
<feature type="coiled-coil region" evidence="1">
    <location>
        <begin position="1021"/>
        <end position="1050"/>
    </location>
</feature>
<feature type="compositionally biased region" description="Gly residues" evidence="3">
    <location>
        <begin position="15"/>
        <end position="24"/>
    </location>
</feature>
<feature type="compositionally biased region" description="Basic and acidic residues" evidence="3">
    <location>
        <begin position="651"/>
        <end position="662"/>
    </location>
</feature>
<feature type="compositionally biased region" description="Low complexity" evidence="3">
    <location>
        <begin position="686"/>
        <end position="700"/>
    </location>
</feature>
<feature type="compositionally biased region" description="Basic and acidic residues" evidence="3">
    <location>
        <begin position="725"/>
        <end position="736"/>
    </location>
</feature>
<feature type="compositionally biased region" description="Basic and acidic residues" evidence="3">
    <location>
        <begin position="762"/>
        <end position="771"/>
    </location>
</feature>
<feature type="compositionally biased region" description="Polar residues" evidence="3">
    <location>
        <begin position="832"/>
        <end position="841"/>
    </location>
</feature>
<feature type="compositionally biased region" description="Low complexity" evidence="3">
    <location>
        <begin position="1168"/>
        <end position="1179"/>
    </location>
</feature>
<feature type="compositionally biased region" description="Polar residues" evidence="3">
    <location>
        <begin position="1184"/>
        <end position="1202"/>
    </location>
</feature>
<feature type="modified residue" description="Phosphoserine" evidence="13">
    <location>
        <position position="150"/>
    </location>
</feature>
<feature type="modified residue" description="Phosphothreonine" evidence="10">
    <location>
        <position position="230"/>
    </location>
</feature>
<feature type="modified residue" description="Phosphoserine" evidence="11 12 13">
    <location>
        <position position="239"/>
    </location>
</feature>
<feature type="modified residue" description="Phosphoserine" evidence="10 11 12 13">
    <location>
        <position position="242"/>
    </location>
</feature>
<feature type="modified residue" description="Phosphoserine" evidence="10 12">
    <location>
        <position position="244"/>
    </location>
</feature>
<feature type="modified residue" description="Phosphoserine" evidence="12">
    <location>
        <position position="448"/>
    </location>
</feature>
<feature type="modified residue" description="Phosphoserine" evidence="13">
    <location>
        <position position="666"/>
    </location>
</feature>
<feature type="modified residue" description="Phosphoserine" evidence="14">
    <location>
        <position position="668"/>
    </location>
</feature>
<feature type="modified residue" description="Phosphoserine" evidence="11 13">
    <location>
        <position position="693"/>
    </location>
</feature>
<feature type="modified residue" description="Phosphothreonine" evidence="14">
    <location>
        <position position="761"/>
    </location>
</feature>
<feature type="modified residue" description="Phosphoserine" evidence="13">
    <location>
        <position position="763"/>
    </location>
</feature>
<feature type="modified residue" description="Phosphoserine" evidence="13">
    <location>
        <position position="1133"/>
    </location>
</feature>
<feature type="modified residue" description="Phosphothreonine" evidence="11">
    <location>
        <position position="1159"/>
    </location>
</feature>
<feature type="splice variant" id="VSP_009391" description="In isoform 2." evidence="8">
    <original>NVSGTQRLDSATVRTYSC</original>
    <variation>M</variation>
    <location>
        <begin position="1185"/>
        <end position="1202"/>
    </location>
</feature>
<feature type="sequence variant" id="VAR_017756" description="In dbSNP:rs546502.">
    <original>V</original>
    <variation>I</variation>
    <location>
        <position position="71"/>
    </location>
</feature>
<feature type="sequence variant" id="VAR_049998" description="In dbSNP:rs11236045.">
    <original>L</original>
    <variation>F</variation>
    <location>
        <position position="1072"/>
    </location>
</feature>
<feature type="sequence conflict" description="In Ref. 3; AAH34046." evidence="9" ref="3">
    <original>E</original>
    <variation>G</variation>
    <location>
        <position position="492"/>
    </location>
</feature>
<feature type="sequence conflict" description="In Ref. 3; AAH34046." evidence="9" ref="3">
    <original>P</original>
    <variation>T</variation>
    <location>
        <position position="555"/>
    </location>
</feature>
<feature type="sequence conflict" description="In Ref. 4; BAA08353." evidence="9" ref="4">
    <original>LGR</original>
    <variation>EFG</variation>
    <location>
        <begin position="672"/>
        <end position="674"/>
    </location>
</feature>
<feature type="sequence conflict" description="In Ref. 4; BAA08353." evidence="9" ref="4">
    <original>KK</original>
    <variation>EE</variation>
    <location>
        <begin position="800"/>
        <end position="801"/>
    </location>
</feature>
<feature type="sequence conflict" description="In Ref. 3; AAH34046." evidence="9" ref="3">
    <original>E</original>
    <variation>G</variation>
    <location>
        <position position="866"/>
    </location>
</feature>
<feature type="sequence conflict" description="In Ref. 4; BAA08353." evidence="9" ref="4">
    <original>L</original>
    <variation>Q</variation>
    <location>
        <position position="994"/>
    </location>
</feature>
<feature type="sequence conflict" description="In Ref. 4; BAA08353." evidence="9" ref="4">
    <original>C</original>
    <variation>S</variation>
    <location>
        <position position="1023"/>
    </location>
</feature>
<feature type="sequence conflict" description="In Ref. 4; BAA08353." evidence="9" ref="4">
    <original>E</original>
    <variation>EVRV</variation>
    <location>
        <position position="1044"/>
    </location>
</feature>
<feature type="sequence conflict" description="In Ref. 4; BAA08353." evidence="9" ref="4">
    <original>GTD</original>
    <variation>PEF</variation>
    <location>
        <begin position="1121"/>
        <end position="1123"/>
    </location>
</feature>
<feature type="strand" evidence="15">
    <location>
        <begin position="1198"/>
        <end position="1201"/>
    </location>
</feature>